<sequence>MLLHLPLAELEVGHHLYWQIGNLNIHGQVFLSSWIVIGALLAVVVLGTRKMERDPRGVQNLLEFLWDYLRDLARDQIGEKVYRDWLPFIGTLFLFIFVSNWGGALIPWRIVHLPSGELGAPTADINTTVAMALLVSLAFFYAGLSNKGLKFFEYYVEPTPIMLPFKIIEEFTKPLSLSFRLFGNILADELAVAVLASLVPLLVPLPVMLLGLFTSAIQALIFATLAAFYIGEAVHEEAH</sequence>
<dbReference type="EMBL" id="CT978603">
    <property type="protein sequence ID" value="CAK28786.1"/>
    <property type="molecule type" value="Genomic_DNA"/>
</dbReference>
<dbReference type="SMR" id="A5GV77"/>
<dbReference type="STRING" id="316278.SynRCC307_1883"/>
<dbReference type="KEGG" id="syr:SynRCC307_1883"/>
<dbReference type="eggNOG" id="COG0356">
    <property type="taxonomic scope" value="Bacteria"/>
</dbReference>
<dbReference type="HOGENOM" id="CLU_041018_2_4_3"/>
<dbReference type="OrthoDB" id="9789241at2"/>
<dbReference type="Proteomes" id="UP000001115">
    <property type="component" value="Chromosome"/>
</dbReference>
<dbReference type="GO" id="GO:0031676">
    <property type="term" value="C:plasma membrane-derived thylakoid membrane"/>
    <property type="evidence" value="ECO:0007669"/>
    <property type="project" value="UniProtKB-SubCell"/>
</dbReference>
<dbReference type="GO" id="GO:0045259">
    <property type="term" value="C:proton-transporting ATP synthase complex"/>
    <property type="evidence" value="ECO:0007669"/>
    <property type="project" value="UniProtKB-KW"/>
</dbReference>
<dbReference type="GO" id="GO:0046933">
    <property type="term" value="F:proton-transporting ATP synthase activity, rotational mechanism"/>
    <property type="evidence" value="ECO:0007669"/>
    <property type="project" value="UniProtKB-UniRule"/>
</dbReference>
<dbReference type="CDD" id="cd00310">
    <property type="entry name" value="ATP-synt_Fo_a_6"/>
    <property type="match status" value="1"/>
</dbReference>
<dbReference type="FunFam" id="1.20.120.220:FF:000001">
    <property type="entry name" value="ATP synthase subunit a, chloroplastic"/>
    <property type="match status" value="1"/>
</dbReference>
<dbReference type="Gene3D" id="1.20.120.220">
    <property type="entry name" value="ATP synthase, F0 complex, subunit A"/>
    <property type="match status" value="1"/>
</dbReference>
<dbReference type="HAMAP" id="MF_01393">
    <property type="entry name" value="ATP_synth_a_bact"/>
    <property type="match status" value="1"/>
</dbReference>
<dbReference type="InterPro" id="IPR045082">
    <property type="entry name" value="ATP_syn_F0_a_bact/chloroplast"/>
</dbReference>
<dbReference type="InterPro" id="IPR000568">
    <property type="entry name" value="ATP_synth_F0_asu"/>
</dbReference>
<dbReference type="InterPro" id="IPR023011">
    <property type="entry name" value="ATP_synth_F0_asu_AS"/>
</dbReference>
<dbReference type="InterPro" id="IPR035908">
    <property type="entry name" value="F0_ATP_A_sf"/>
</dbReference>
<dbReference type="NCBIfam" id="TIGR01131">
    <property type="entry name" value="ATP_synt_6_or_A"/>
    <property type="match status" value="1"/>
</dbReference>
<dbReference type="PANTHER" id="PTHR42823">
    <property type="entry name" value="ATP SYNTHASE SUBUNIT A, CHLOROPLASTIC"/>
    <property type="match status" value="1"/>
</dbReference>
<dbReference type="PANTHER" id="PTHR42823:SF3">
    <property type="entry name" value="ATP SYNTHASE SUBUNIT A, CHLOROPLASTIC"/>
    <property type="match status" value="1"/>
</dbReference>
<dbReference type="Pfam" id="PF00119">
    <property type="entry name" value="ATP-synt_A"/>
    <property type="match status" value="1"/>
</dbReference>
<dbReference type="PRINTS" id="PR00123">
    <property type="entry name" value="ATPASEA"/>
</dbReference>
<dbReference type="SUPFAM" id="SSF81336">
    <property type="entry name" value="F1F0 ATP synthase subunit A"/>
    <property type="match status" value="1"/>
</dbReference>
<dbReference type="PROSITE" id="PS00449">
    <property type="entry name" value="ATPASE_A"/>
    <property type="match status" value="1"/>
</dbReference>
<keyword id="KW-0066">ATP synthesis</keyword>
<keyword id="KW-0138">CF(0)</keyword>
<keyword id="KW-0375">Hydrogen ion transport</keyword>
<keyword id="KW-0406">Ion transport</keyword>
<keyword id="KW-0472">Membrane</keyword>
<keyword id="KW-1185">Reference proteome</keyword>
<keyword id="KW-0793">Thylakoid</keyword>
<keyword id="KW-0812">Transmembrane</keyword>
<keyword id="KW-1133">Transmembrane helix</keyword>
<keyword id="KW-0813">Transport</keyword>
<gene>
    <name evidence="1" type="primary">atpB</name>
    <name evidence="1" type="synonym">atpI</name>
    <name type="ordered locus">SynRCC307_1883</name>
</gene>
<feature type="chain" id="PRO_0000362490" description="ATP synthase subunit a">
    <location>
        <begin position="1"/>
        <end position="239"/>
    </location>
</feature>
<feature type="transmembrane region" description="Helical" evidence="1">
    <location>
        <begin position="27"/>
        <end position="47"/>
    </location>
</feature>
<feature type="transmembrane region" description="Helical" evidence="1">
    <location>
        <begin position="86"/>
        <end position="106"/>
    </location>
</feature>
<feature type="transmembrane region" description="Helical" evidence="1">
    <location>
        <begin position="125"/>
        <end position="145"/>
    </location>
</feature>
<feature type="transmembrane region" description="Helical" evidence="1">
    <location>
        <begin position="190"/>
        <end position="210"/>
    </location>
</feature>
<feature type="transmembrane region" description="Helical" evidence="1">
    <location>
        <begin position="211"/>
        <end position="231"/>
    </location>
</feature>
<accession>A5GV77</accession>
<comment type="function">
    <text evidence="1">Key component of the proton channel; it plays a direct role in the translocation of protons across the membrane.</text>
</comment>
<comment type="subunit">
    <text evidence="1">F-type ATPases have 2 components, CF(1) - the catalytic core - and CF(0) - the membrane proton channel. CF(1) has five subunits: alpha(3), beta(3), gamma(1), delta(1), epsilon(1). CF(0) has four main subunits: a, b, b' and c.</text>
</comment>
<comment type="subcellular location">
    <subcellularLocation>
        <location evidence="1">Cellular thylakoid membrane</location>
        <topology evidence="1">Multi-pass membrane protein</topology>
    </subcellularLocation>
</comment>
<comment type="similarity">
    <text evidence="1">Belongs to the ATPase A chain family.</text>
</comment>
<reference key="1">
    <citation type="submission" date="2006-05" db="EMBL/GenBank/DDBJ databases">
        <authorList>
            <consortium name="Genoscope"/>
        </authorList>
    </citation>
    <scope>NUCLEOTIDE SEQUENCE [LARGE SCALE GENOMIC DNA]</scope>
    <source>
        <strain>RCC307</strain>
    </source>
</reference>
<name>ATP6_SYNR3</name>
<protein>
    <recommendedName>
        <fullName evidence="1">ATP synthase subunit a</fullName>
    </recommendedName>
    <alternativeName>
        <fullName evidence="1">ATP synthase F0 sector subunit a</fullName>
    </alternativeName>
    <alternativeName>
        <fullName evidence="1">F-ATPase subunit 6</fullName>
    </alternativeName>
</protein>
<organism>
    <name type="scientific">Synechococcus sp. (strain RCC307)</name>
    <dbReference type="NCBI Taxonomy" id="316278"/>
    <lineage>
        <taxon>Bacteria</taxon>
        <taxon>Bacillati</taxon>
        <taxon>Cyanobacteriota</taxon>
        <taxon>Cyanophyceae</taxon>
        <taxon>Synechococcales</taxon>
        <taxon>Synechococcaceae</taxon>
        <taxon>Synechococcus</taxon>
    </lineage>
</organism>
<evidence type="ECO:0000255" key="1">
    <source>
        <dbReference type="HAMAP-Rule" id="MF_01393"/>
    </source>
</evidence>
<proteinExistence type="inferred from homology"/>